<organism>
    <name type="scientific">Drosophila melanogaster</name>
    <name type="common">Fruit fly</name>
    <dbReference type="NCBI Taxonomy" id="7227"/>
    <lineage>
        <taxon>Eukaryota</taxon>
        <taxon>Metazoa</taxon>
        <taxon>Ecdysozoa</taxon>
        <taxon>Arthropoda</taxon>
        <taxon>Hexapoda</taxon>
        <taxon>Insecta</taxon>
        <taxon>Pterygota</taxon>
        <taxon>Neoptera</taxon>
        <taxon>Endopterygota</taxon>
        <taxon>Diptera</taxon>
        <taxon>Brachycera</taxon>
        <taxon>Muscomorpha</taxon>
        <taxon>Ephydroidea</taxon>
        <taxon>Drosophilidae</taxon>
        <taxon>Drosophila</taxon>
        <taxon>Sophophora</taxon>
    </lineage>
</organism>
<keyword id="KW-0256">Endoplasmic reticulum</keyword>
<keyword id="KW-0349">Heme</keyword>
<keyword id="KW-0408">Iron</keyword>
<keyword id="KW-0472">Membrane</keyword>
<keyword id="KW-0479">Metal-binding</keyword>
<keyword id="KW-0492">Microsome</keyword>
<keyword id="KW-0503">Monooxygenase</keyword>
<keyword id="KW-0560">Oxidoreductase</keyword>
<keyword id="KW-1185">Reference proteome</keyword>
<sequence length="574" mass="65177">MSADIVDIGHTGWMPSVQSLSILLVPGALVLVILYLCERQCNDLMGAPPPGPWGLPFLGYLPFLDARAPHKSLQKLAKRYGGIFELKMGRVPTVVLSDAALVRDFFRRDVMTGRAPLYLTHGIMGGFGIICAQEDIWRHARRETIDWLKALGMTRRPGELRARLERRIARGVDECVRLFDTEAKKSCASEVNPLPALHHSLGNIINDLVFGITYKRDDPDWLYLQRLQEEGVKLIGVSGVVNFLPWLRHLPANVRNIRFLLEGKAKTHAIYDRIVEACGQRLKEKQKVFKELQEQKRLQRQLEKEQLRQSKEADPSQEQSEADEDDEESDEEDTYEPECILEHFLAVRDTDSQLYCDDQLRHLLADLFGAGVDTSLATLRWFLLYLAREQRCQRRLHELLLPLGPSPTLEELEPLAYLRACISETMRIRSVVPLGIPHGCKENFVVGDYFIKGGSMIVCSEWAIHMDPVAFPEPEEFRPERFLTADGAYQAPPQFIPFSSGYRMCPGEEMARMILTLFTGRILRRFHLELPSGTEVDMAGESGITLTPTPHMLRFTKLPAVEMRHAPDGAVVQD</sequence>
<protein>
    <recommendedName>
        <fullName>Cytochrome P450 306a1</fullName>
        <shortName>CYPCCCVIA1</shortName>
        <ecNumber evidence="3">1.14.15.-</ecNumber>
    </recommendedName>
    <alternativeName>
        <fullName evidence="5">Protein phantom</fullName>
        <shortName>Dmphm</shortName>
    </alternativeName>
</protein>
<reference key="1">
    <citation type="journal article" date="2004" name="Insect Biochem. Mol. Biol.">
        <title>Phantom encodes the 25-hydroxylase of Drosophila melanogaster and Bombyx mori: a P450 enzyme critical in ecdysone biosynthesis.</title>
        <authorList>
            <person name="Warren J.T."/>
            <person name="Petryk A."/>
            <person name="Marques G."/>
            <person name="Parvy J.P."/>
            <person name="Shinoda T."/>
            <person name="Itoyama K."/>
            <person name="Kobayashi J."/>
            <person name="Jarcho M."/>
            <person name="Li Y."/>
            <person name="O'Connor M.B."/>
            <person name="Dauphin-Villemant C."/>
            <person name="Gilbert L.I."/>
        </authorList>
    </citation>
    <scope>NUCLEOTIDE SEQUENCE [MRNA]</scope>
    <scope>FUNCTION</scope>
    <scope>CATALYTIC ACTIVITY</scope>
    <scope>PATHWAY</scope>
    <scope>SUBCELLULAR LOCATION</scope>
    <scope>TISSUE SPECIFICITY</scope>
    <scope>DEVELOPMENTAL STAGE</scope>
    <source>
        <tissue>Embryo</tissue>
    </source>
</reference>
<reference key="2">
    <citation type="journal article" date="2007" name="Mol. Biol. Evol.">
        <title>Genome scans of variation and adaptive change: extended analysis of a candidate locus close to the phantom gene region in Drosophila melanogaster.</title>
        <authorList>
            <person name="Orengo D.J."/>
            <person name="Aguade M."/>
        </authorList>
    </citation>
    <scope>NUCLEOTIDE SEQUENCE [GENOMIC DNA]</scope>
    <scope>VARIANTS PHE-399 AND THR-560</scope>
    <source>
        <strain>CN10X</strain>
        <strain>CN11X</strain>
        <strain>CN13X</strain>
        <strain>CN15X</strain>
        <strain>CN16X</strain>
        <strain>CN17X</strain>
        <strain>CN19X</strain>
        <strain>CN21X</strain>
        <strain>CN22BX</strain>
        <strain>CN3X</strain>
        <strain>CN7X</strain>
    </source>
</reference>
<reference key="3">
    <citation type="journal article" date="2000" name="Science">
        <title>The genome sequence of Drosophila melanogaster.</title>
        <authorList>
            <person name="Adams M.D."/>
            <person name="Celniker S.E."/>
            <person name="Holt R.A."/>
            <person name="Evans C.A."/>
            <person name="Gocayne J.D."/>
            <person name="Amanatides P.G."/>
            <person name="Scherer S.E."/>
            <person name="Li P.W."/>
            <person name="Hoskins R.A."/>
            <person name="Galle R.F."/>
            <person name="George R.A."/>
            <person name="Lewis S.E."/>
            <person name="Richards S."/>
            <person name="Ashburner M."/>
            <person name="Henderson S.N."/>
            <person name="Sutton G.G."/>
            <person name="Wortman J.R."/>
            <person name="Yandell M.D."/>
            <person name="Zhang Q."/>
            <person name="Chen L.X."/>
            <person name="Brandon R.C."/>
            <person name="Rogers Y.-H.C."/>
            <person name="Blazej R.G."/>
            <person name="Champe M."/>
            <person name="Pfeiffer B.D."/>
            <person name="Wan K.H."/>
            <person name="Doyle C."/>
            <person name="Baxter E.G."/>
            <person name="Helt G."/>
            <person name="Nelson C.R."/>
            <person name="Miklos G.L.G."/>
            <person name="Abril J.F."/>
            <person name="Agbayani A."/>
            <person name="An H.-J."/>
            <person name="Andrews-Pfannkoch C."/>
            <person name="Baldwin D."/>
            <person name="Ballew R.M."/>
            <person name="Basu A."/>
            <person name="Baxendale J."/>
            <person name="Bayraktaroglu L."/>
            <person name="Beasley E.M."/>
            <person name="Beeson K.Y."/>
            <person name="Benos P.V."/>
            <person name="Berman B.P."/>
            <person name="Bhandari D."/>
            <person name="Bolshakov S."/>
            <person name="Borkova D."/>
            <person name="Botchan M.R."/>
            <person name="Bouck J."/>
            <person name="Brokstein P."/>
            <person name="Brottier P."/>
            <person name="Burtis K.C."/>
            <person name="Busam D.A."/>
            <person name="Butler H."/>
            <person name="Cadieu E."/>
            <person name="Center A."/>
            <person name="Chandra I."/>
            <person name="Cherry J.M."/>
            <person name="Cawley S."/>
            <person name="Dahlke C."/>
            <person name="Davenport L.B."/>
            <person name="Davies P."/>
            <person name="de Pablos B."/>
            <person name="Delcher A."/>
            <person name="Deng Z."/>
            <person name="Mays A.D."/>
            <person name="Dew I."/>
            <person name="Dietz S.M."/>
            <person name="Dodson K."/>
            <person name="Doup L.E."/>
            <person name="Downes M."/>
            <person name="Dugan-Rocha S."/>
            <person name="Dunkov B.C."/>
            <person name="Dunn P."/>
            <person name="Durbin K.J."/>
            <person name="Evangelista C.C."/>
            <person name="Ferraz C."/>
            <person name="Ferriera S."/>
            <person name="Fleischmann W."/>
            <person name="Fosler C."/>
            <person name="Gabrielian A.E."/>
            <person name="Garg N.S."/>
            <person name="Gelbart W.M."/>
            <person name="Glasser K."/>
            <person name="Glodek A."/>
            <person name="Gong F."/>
            <person name="Gorrell J.H."/>
            <person name="Gu Z."/>
            <person name="Guan P."/>
            <person name="Harris M."/>
            <person name="Harris N.L."/>
            <person name="Harvey D.A."/>
            <person name="Heiman T.J."/>
            <person name="Hernandez J.R."/>
            <person name="Houck J."/>
            <person name="Hostin D."/>
            <person name="Houston K.A."/>
            <person name="Howland T.J."/>
            <person name="Wei M.-H."/>
            <person name="Ibegwam C."/>
            <person name="Jalali M."/>
            <person name="Kalush F."/>
            <person name="Karpen G.H."/>
            <person name="Ke Z."/>
            <person name="Kennison J.A."/>
            <person name="Ketchum K.A."/>
            <person name="Kimmel B.E."/>
            <person name="Kodira C.D."/>
            <person name="Kraft C.L."/>
            <person name="Kravitz S."/>
            <person name="Kulp D."/>
            <person name="Lai Z."/>
            <person name="Lasko P."/>
            <person name="Lei Y."/>
            <person name="Levitsky A.A."/>
            <person name="Li J.H."/>
            <person name="Li Z."/>
            <person name="Liang Y."/>
            <person name="Lin X."/>
            <person name="Liu X."/>
            <person name="Mattei B."/>
            <person name="McIntosh T.C."/>
            <person name="McLeod M.P."/>
            <person name="McPherson D."/>
            <person name="Merkulov G."/>
            <person name="Milshina N.V."/>
            <person name="Mobarry C."/>
            <person name="Morris J."/>
            <person name="Moshrefi A."/>
            <person name="Mount S.M."/>
            <person name="Moy M."/>
            <person name="Murphy B."/>
            <person name="Murphy L."/>
            <person name="Muzny D.M."/>
            <person name="Nelson D.L."/>
            <person name="Nelson D.R."/>
            <person name="Nelson K.A."/>
            <person name="Nixon K."/>
            <person name="Nusskern D.R."/>
            <person name="Pacleb J.M."/>
            <person name="Palazzolo M."/>
            <person name="Pittman G.S."/>
            <person name="Pan S."/>
            <person name="Pollard J."/>
            <person name="Puri V."/>
            <person name="Reese M.G."/>
            <person name="Reinert K."/>
            <person name="Remington K."/>
            <person name="Saunders R.D.C."/>
            <person name="Scheeler F."/>
            <person name="Shen H."/>
            <person name="Shue B.C."/>
            <person name="Siden-Kiamos I."/>
            <person name="Simpson M."/>
            <person name="Skupski M.P."/>
            <person name="Smith T.J."/>
            <person name="Spier E."/>
            <person name="Spradling A.C."/>
            <person name="Stapleton M."/>
            <person name="Strong R."/>
            <person name="Sun E."/>
            <person name="Svirskas R."/>
            <person name="Tector C."/>
            <person name="Turner R."/>
            <person name="Venter E."/>
            <person name="Wang A.H."/>
            <person name="Wang X."/>
            <person name="Wang Z.-Y."/>
            <person name="Wassarman D.A."/>
            <person name="Weinstock G.M."/>
            <person name="Weissenbach J."/>
            <person name="Williams S.M."/>
            <person name="Woodage T."/>
            <person name="Worley K.C."/>
            <person name="Wu D."/>
            <person name="Yang S."/>
            <person name="Yao Q.A."/>
            <person name="Ye J."/>
            <person name="Yeh R.-F."/>
            <person name="Zaveri J.S."/>
            <person name="Zhan M."/>
            <person name="Zhang G."/>
            <person name="Zhao Q."/>
            <person name="Zheng L."/>
            <person name="Zheng X.H."/>
            <person name="Zhong F.N."/>
            <person name="Zhong W."/>
            <person name="Zhou X."/>
            <person name="Zhu S.C."/>
            <person name="Zhu X."/>
            <person name="Smith H.O."/>
            <person name="Gibbs R.A."/>
            <person name="Myers E.W."/>
            <person name="Rubin G.M."/>
            <person name="Venter J.C."/>
        </authorList>
    </citation>
    <scope>NUCLEOTIDE SEQUENCE [LARGE SCALE GENOMIC DNA]</scope>
    <source>
        <strain>Berkeley</strain>
    </source>
</reference>
<reference key="4">
    <citation type="journal article" date="2002" name="Genome Biol.">
        <title>Annotation of the Drosophila melanogaster euchromatic genome: a systematic review.</title>
        <authorList>
            <person name="Misra S."/>
            <person name="Crosby M.A."/>
            <person name="Mungall C.J."/>
            <person name="Matthews B.B."/>
            <person name="Campbell K.S."/>
            <person name="Hradecky P."/>
            <person name="Huang Y."/>
            <person name="Kaminker J.S."/>
            <person name="Millburn G.H."/>
            <person name="Prochnik S.E."/>
            <person name="Smith C.D."/>
            <person name="Tupy J.L."/>
            <person name="Whitfield E.J."/>
            <person name="Bayraktaroglu L."/>
            <person name="Berman B.P."/>
            <person name="Bettencourt B.R."/>
            <person name="Celniker S.E."/>
            <person name="de Grey A.D.N.J."/>
            <person name="Drysdale R.A."/>
            <person name="Harris N.L."/>
            <person name="Richter J."/>
            <person name="Russo S."/>
            <person name="Schroeder A.J."/>
            <person name="Shu S.Q."/>
            <person name="Stapleton M."/>
            <person name="Yamada C."/>
            <person name="Ashburner M."/>
            <person name="Gelbart W.M."/>
            <person name="Rubin G.M."/>
            <person name="Lewis S.E."/>
        </authorList>
    </citation>
    <scope>GENOME REANNOTATION</scope>
    <source>
        <strain>Berkeley</strain>
    </source>
</reference>
<reference key="5">
    <citation type="journal article" date="2002" name="Genome Biol.">
        <title>A Drosophila full-length cDNA resource.</title>
        <authorList>
            <person name="Stapleton M."/>
            <person name="Carlson J.W."/>
            <person name="Brokstein P."/>
            <person name="Yu C."/>
            <person name="Champe M."/>
            <person name="George R.A."/>
            <person name="Guarin H."/>
            <person name="Kronmiller B."/>
            <person name="Pacleb J.M."/>
            <person name="Park S."/>
            <person name="Wan K.H."/>
            <person name="Rubin G.M."/>
            <person name="Celniker S.E."/>
        </authorList>
    </citation>
    <scope>NUCLEOTIDE SEQUENCE [LARGE SCALE MRNA]</scope>
    <source>
        <strain>Berkeley</strain>
        <tissue>Embryo</tissue>
    </source>
</reference>
<comment type="function">
    <text evidence="3">Involved in the metabolism of insect hormones; responsible for ecdysteroid C25-hydroxylase activity. May be involved in the breakdown of synthetic insecticides.</text>
</comment>
<comment type="catalytic activity">
    <reaction evidence="3">
        <text>2,22,25-trideoxyecdysone + 2 reduced [adrenodoxin] + O2 + 2 H(+) = 2,22-dideoxyecdysone + 2 oxidized [adrenodoxin] + H2O</text>
        <dbReference type="Rhea" id="RHEA:82347"/>
        <dbReference type="Rhea" id="RHEA-COMP:9998"/>
        <dbReference type="Rhea" id="RHEA-COMP:9999"/>
        <dbReference type="ChEBI" id="CHEBI:15377"/>
        <dbReference type="ChEBI" id="CHEBI:15378"/>
        <dbReference type="ChEBI" id="CHEBI:15379"/>
        <dbReference type="ChEBI" id="CHEBI:19290"/>
        <dbReference type="ChEBI" id="CHEBI:33737"/>
        <dbReference type="ChEBI" id="CHEBI:33738"/>
        <dbReference type="ChEBI" id="CHEBI:80530"/>
    </reaction>
</comment>
<comment type="cofactor">
    <cofactor evidence="1">
        <name>heme</name>
        <dbReference type="ChEBI" id="CHEBI:30413"/>
    </cofactor>
</comment>
<comment type="pathway">
    <text evidence="3">Steroid biosynthesis; ecdysteroid biosynthesis.</text>
</comment>
<comment type="subcellular location">
    <subcellularLocation>
        <location evidence="3">Endoplasmic reticulum membrane</location>
        <topology evidence="3">Peripheral membrane protein</topology>
    </subcellularLocation>
    <subcellularLocation>
        <location evidence="3">Microsome membrane</location>
        <topology evidence="3">Peripheral membrane protein</topology>
    </subcellularLocation>
</comment>
<comment type="tissue specificity">
    <text evidence="3">First seen at the early (syncytial) blastoderm stage 4. During cellularization of the blastoderm (stage 5), stripes of expression appear and remain through to stage 10. Expression becomes undetectable during germ band retraction (stages 11-14). By stage 15, some expression resumes in the primordium of the ring gland, so that by stage 17 strong expression is seen, but only in the ring gland. This specific localization continues throughout the larval instars (at protein level). Expressed in the prothoracic gland cells of the larval ring gland (RG). Levels decline just after the molt to the third instar then increase later during the wandering stage. Low levels of expression are seen in the larval brain and fat body. In the adult, majority of expression is restricted to the ovaries, with low levels in the head and carcass of both sexes.</text>
</comment>
<comment type="developmental stage">
    <text evidence="3">Expressed both maternally and zygotically.</text>
</comment>
<comment type="miscellaneous">
    <text>Member of the Halloween gene group.</text>
</comment>
<comment type="similarity">
    <text evidence="6">Belongs to the cytochrome P450 family.</text>
</comment>
<comment type="caution">
    <text evidence="6">It is uncertain whether Met-1 or Met-14 is the initiator.</text>
</comment>
<name>CP306_DROME</name>
<feature type="chain" id="PRO_0000052315" description="Cytochrome P450 306a1">
    <location>
        <begin position="1"/>
        <end position="574"/>
    </location>
</feature>
<feature type="region of interest" description="Disordered" evidence="2">
    <location>
        <begin position="303"/>
        <end position="333"/>
    </location>
</feature>
<feature type="compositionally biased region" description="Basic and acidic residues" evidence="2">
    <location>
        <begin position="303"/>
        <end position="314"/>
    </location>
</feature>
<feature type="compositionally biased region" description="Acidic residues" evidence="2">
    <location>
        <begin position="320"/>
        <end position="333"/>
    </location>
</feature>
<feature type="binding site" description="axial binding residue" evidence="1">
    <location>
        <position position="505"/>
    </location>
    <ligand>
        <name>heme</name>
        <dbReference type="ChEBI" id="CHEBI:30413"/>
    </ligand>
    <ligandPart>
        <name>Fe</name>
        <dbReference type="ChEBI" id="CHEBI:18248"/>
    </ligandPart>
</feature>
<feature type="sequence variant" description="In strain: CN13X." evidence="4">
    <original>L</original>
    <variation>F</variation>
    <location>
        <position position="399"/>
    </location>
</feature>
<feature type="sequence variant" description="In strain: CN11X." evidence="4">
    <original>A</original>
    <variation>T</variation>
    <location>
        <position position="560"/>
    </location>
</feature>
<gene>
    <name evidence="5 7" type="primary">phtm</name>
    <name type="synonym">Cyp306a1</name>
    <name evidence="7" type="ORF">CG6578</name>
</gene>
<dbReference type="EC" id="1.14.15.-" evidence="3"/>
<dbReference type="EMBL" id="AF484413">
    <property type="protein sequence ID" value="AAQ05971.1"/>
    <property type="molecule type" value="mRNA"/>
</dbReference>
<dbReference type="EMBL" id="AM411848">
    <property type="protein sequence ID" value="CAL69929.1"/>
    <property type="molecule type" value="Genomic_DNA"/>
</dbReference>
<dbReference type="EMBL" id="AM411849">
    <property type="protein sequence ID" value="CAL69931.1"/>
    <property type="molecule type" value="Genomic_DNA"/>
</dbReference>
<dbReference type="EMBL" id="AM411850">
    <property type="protein sequence ID" value="CAL69933.1"/>
    <property type="molecule type" value="Genomic_DNA"/>
</dbReference>
<dbReference type="EMBL" id="AM411851">
    <property type="protein sequence ID" value="CAL69935.1"/>
    <property type="molecule type" value="Genomic_DNA"/>
</dbReference>
<dbReference type="EMBL" id="AM411852">
    <property type="protein sequence ID" value="CAL69937.1"/>
    <property type="molecule type" value="Genomic_DNA"/>
</dbReference>
<dbReference type="EMBL" id="AM411853">
    <property type="protein sequence ID" value="CAL69939.1"/>
    <property type="molecule type" value="Genomic_DNA"/>
</dbReference>
<dbReference type="EMBL" id="AM411854">
    <property type="protein sequence ID" value="CAL69941.1"/>
    <property type="molecule type" value="Genomic_DNA"/>
</dbReference>
<dbReference type="EMBL" id="AM411855">
    <property type="protein sequence ID" value="CAL69943.1"/>
    <property type="molecule type" value="Genomic_DNA"/>
</dbReference>
<dbReference type="EMBL" id="AM411856">
    <property type="protein sequence ID" value="CAL69945.1"/>
    <property type="molecule type" value="Genomic_DNA"/>
</dbReference>
<dbReference type="EMBL" id="AM411857">
    <property type="protein sequence ID" value="CAL69947.1"/>
    <property type="molecule type" value="Genomic_DNA"/>
</dbReference>
<dbReference type="EMBL" id="AM411858">
    <property type="protein sequence ID" value="CAL69949.1"/>
    <property type="molecule type" value="Genomic_DNA"/>
</dbReference>
<dbReference type="EMBL" id="AM411859">
    <property type="protein sequence ID" value="CAL69951.1"/>
    <property type="molecule type" value="Genomic_DNA"/>
</dbReference>
<dbReference type="EMBL" id="AM411860">
    <property type="protein sequence ID" value="CAL69953.1"/>
    <property type="molecule type" value="Genomic_DNA"/>
</dbReference>
<dbReference type="EMBL" id="AE014298">
    <property type="protein sequence ID" value="AAF48873.1"/>
    <property type="molecule type" value="Genomic_DNA"/>
</dbReference>
<dbReference type="EMBL" id="AY070930">
    <property type="protein sequence ID" value="AAL48552.1"/>
    <property type="molecule type" value="mRNA"/>
</dbReference>
<dbReference type="RefSeq" id="NP_001285414.1">
    <property type="nucleotide sequence ID" value="NM_001298485.1"/>
</dbReference>
<dbReference type="RefSeq" id="NP_573319.1">
    <property type="nucleotide sequence ID" value="NM_133091.3"/>
</dbReference>
<dbReference type="SMR" id="Q9VWR5"/>
<dbReference type="BioGRID" id="59169">
    <property type="interactions" value="3"/>
</dbReference>
<dbReference type="DIP" id="DIP-21151N"/>
<dbReference type="FunCoup" id="Q9VWR5">
    <property type="interactions" value="27"/>
</dbReference>
<dbReference type="IntAct" id="Q9VWR5">
    <property type="interactions" value="2"/>
</dbReference>
<dbReference type="STRING" id="7227.FBpp0309669"/>
<dbReference type="PaxDb" id="7227-FBpp0074374"/>
<dbReference type="DNASU" id="32857"/>
<dbReference type="EnsemblMetazoa" id="FBtr0074603">
    <property type="protein sequence ID" value="FBpp0074374"/>
    <property type="gene ID" value="FBgn0004959"/>
</dbReference>
<dbReference type="EnsemblMetazoa" id="FBtr0342846">
    <property type="protein sequence ID" value="FBpp0309669"/>
    <property type="gene ID" value="FBgn0004959"/>
</dbReference>
<dbReference type="GeneID" id="32857"/>
<dbReference type="KEGG" id="dme:Dmel_CG6578"/>
<dbReference type="UCSC" id="CG6578-RA">
    <property type="organism name" value="d. melanogaster"/>
</dbReference>
<dbReference type="AGR" id="FB:FBgn0004959"/>
<dbReference type="CTD" id="32857"/>
<dbReference type="FlyBase" id="FBgn0004959">
    <property type="gene designation" value="phtm"/>
</dbReference>
<dbReference type="VEuPathDB" id="VectorBase:FBgn0004959"/>
<dbReference type="eggNOG" id="KOG0156">
    <property type="taxonomic scope" value="Eukaryota"/>
</dbReference>
<dbReference type="HOGENOM" id="CLU_001570_22_0_1"/>
<dbReference type="InParanoid" id="Q9VWR5"/>
<dbReference type="OMA" id="LYMAREQ"/>
<dbReference type="OrthoDB" id="1844152at2759"/>
<dbReference type="PhylomeDB" id="Q9VWR5"/>
<dbReference type="BioCyc" id="MetaCyc:MONOMER-18105"/>
<dbReference type="Reactome" id="R-DME-196791">
    <property type="pathway name" value="Vitamin D (calciferol) metabolism"/>
</dbReference>
<dbReference type="Reactome" id="R-DME-211916">
    <property type="pathway name" value="Vitamins"/>
</dbReference>
<dbReference type="Reactome" id="R-DME-211935">
    <property type="pathway name" value="Fatty acids"/>
</dbReference>
<dbReference type="Reactome" id="R-DME-211945">
    <property type="pathway name" value="Phase I - Functionalization of compounds"/>
</dbReference>
<dbReference type="Reactome" id="R-DME-211958">
    <property type="pathway name" value="Miscellaneous substrates"/>
</dbReference>
<dbReference type="Reactome" id="R-DME-211981">
    <property type="pathway name" value="Xenobiotics"/>
</dbReference>
<dbReference type="Reactome" id="R-DME-211999">
    <property type="pathway name" value="CYP2E1 reactions"/>
</dbReference>
<dbReference type="Reactome" id="R-DME-2142670">
    <property type="pathway name" value="Synthesis of epoxy (EET) and dihydroxyeicosatrienoic acids (DHET)"/>
</dbReference>
<dbReference type="Reactome" id="R-DME-2142816">
    <property type="pathway name" value="Synthesis of (16-20)-hydroxyeicosatetraenoic acids (HETE)"/>
</dbReference>
<dbReference type="Reactome" id="R-DME-5423646">
    <property type="pathway name" value="Aflatoxin activation and detoxification"/>
</dbReference>
<dbReference type="Reactome" id="R-DME-9027307">
    <property type="pathway name" value="Biosynthesis of maresin-like SPMs"/>
</dbReference>
<dbReference type="Reactome" id="R-DME-9749641">
    <property type="pathway name" value="Aspirin ADME"/>
</dbReference>
<dbReference type="Reactome" id="R-DME-9753281">
    <property type="pathway name" value="Paracetamol ADME"/>
</dbReference>
<dbReference type="UniPathway" id="UPA00765"/>
<dbReference type="ChiTaRS" id="phm">
    <property type="organism name" value="fly"/>
</dbReference>
<dbReference type="GenomeRNAi" id="32857"/>
<dbReference type="PRO" id="PR:Q9VWR5"/>
<dbReference type="Proteomes" id="UP000000803">
    <property type="component" value="Chromosome X"/>
</dbReference>
<dbReference type="Bgee" id="FBgn0004959">
    <property type="expression patterns" value="Expressed in endocrine gland and 32 other cell types or tissues"/>
</dbReference>
<dbReference type="ExpressionAtlas" id="Q9VWR5">
    <property type="expression patterns" value="baseline and differential"/>
</dbReference>
<dbReference type="GO" id="GO:0005737">
    <property type="term" value="C:cytoplasm"/>
    <property type="evidence" value="ECO:0000318"/>
    <property type="project" value="GO_Central"/>
</dbReference>
<dbReference type="GO" id="GO:0005783">
    <property type="term" value="C:endoplasmic reticulum"/>
    <property type="evidence" value="ECO:0000314"/>
    <property type="project" value="FlyBase"/>
</dbReference>
<dbReference type="GO" id="GO:0005789">
    <property type="term" value="C:endoplasmic reticulum membrane"/>
    <property type="evidence" value="ECO:0007669"/>
    <property type="project" value="UniProtKB-SubCell"/>
</dbReference>
<dbReference type="GO" id="GO:0043231">
    <property type="term" value="C:intracellular membrane-bounded organelle"/>
    <property type="evidence" value="ECO:0000318"/>
    <property type="project" value="GO_Central"/>
</dbReference>
<dbReference type="GO" id="GO:0035302">
    <property type="term" value="F:ecdysteroid 25-hydroxylase activity"/>
    <property type="evidence" value="ECO:0000314"/>
    <property type="project" value="FlyBase"/>
</dbReference>
<dbReference type="GO" id="GO:0020037">
    <property type="term" value="F:heme binding"/>
    <property type="evidence" value="ECO:0000318"/>
    <property type="project" value="GO_Central"/>
</dbReference>
<dbReference type="GO" id="GO:0005506">
    <property type="term" value="F:iron ion binding"/>
    <property type="evidence" value="ECO:0007669"/>
    <property type="project" value="InterPro"/>
</dbReference>
<dbReference type="GO" id="GO:0016712">
    <property type="term" value="F:oxidoreductase activity, acting on paired donors, with incorporation or reduction of molecular oxygen, reduced flavin or flavoprotein as one donor, and incorporation of one atom of oxygen"/>
    <property type="evidence" value="ECO:0000318"/>
    <property type="project" value="GO_Central"/>
</dbReference>
<dbReference type="GO" id="GO:0008395">
    <property type="term" value="F:steroid hydroxylase activity"/>
    <property type="evidence" value="ECO:0000318"/>
    <property type="project" value="GO_Central"/>
</dbReference>
<dbReference type="GO" id="GO:0007298">
    <property type="term" value="P:border follicle cell migration"/>
    <property type="evidence" value="ECO:0000315"/>
    <property type="project" value="FlyBase"/>
</dbReference>
<dbReference type="GO" id="GO:0006697">
    <property type="term" value="P:ecdysone biosynthetic process"/>
    <property type="evidence" value="ECO:0000314"/>
    <property type="project" value="FlyBase"/>
</dbReference>
<dbReference type="GO" id="GO:0001700">
    <property type="term" value="P:embryonic development via the syncytial blastoderm"/>
    <property type="evidence" value="ECO:0000315"/>
    <property type="project" value="FlyBase"/>
</dbReference>
<dbReference type="GO" id="GO:0048477">
    <property type="term" value="P:oogenesis"/>
    <property type="evidence" value="ECO:0000315"/>
    <property type="project" value="FlyBase"/>
</dbReference>
<dbReference type="GO" id="GO:0006082">
    <property type="term" value="P:organic acid metabolic process"/>
    <property type="evidence" value="ECO:0000318"/>
    <property type="project" value="GO_Central"/>
</dbReference>
<dbReference type="GO" id="GO:0006805">
    <property type="term" value="P:xenobiotic metabolic process"/>
    <property type="evidence" value="ECO:0000318"/>
    <property type="project" value="GO_Central"/>
</dbReference>
<dbReference type="CDD" id="cd20652">
    <property type="entry name" value="CYP306A1-like"/>
    <property type="match status" value="1"/>
</dbReference>
<dbReference type="Gene3D" id="1.10.630.10">
    <property type="entry name" value="Cytochrome P450"/>
    <property type="match status" value="1"/>
</dbReference>
<dbReference type="InterPro" id="IPR001128">
    <property type="entry name" value="Cyt_P450"/>
</dbReference>
<dbReference type="InterPro" id="IPR017972">
    <property type="entry name" value="Cyt_P450_CS"/>
</dbReference>
<dbReference type="InterPro" id="IPR002401">
    <property type="entry name" value="Cyt_P450_E_grp-I"/>
</dbReference>
<dbReference type="InterPro" id="IPR036396">
    <property type="entry name" value="Cyt_P450_sf"/>
</dbReference>
<dbReference type="InterPro" id="IPR050182">
    <property type="entry name" value="Cytochrome_P450_fam2"/>
</dbReference>
<dbReference type="PANTHER" id="PTHR24300:SF403">
    <property type="entry name" value="CYTOCHROME P450 306A1"/>
    <property type="match status" value="1"/>
</dbReference>
<dbReference type="PANTHER" id="PTHR24300">
    <property type="entry name" value="CYTOCHROME P450 508A4-RELATED"/>
    <property type="match status" value="1"/>
</dbReference>
<dbReference type="Pfam" id="PF00067">
    <property type="entry name" value="p450"/>
    <property type="match status" value="1"/>
</dbReference>
<dbReference type="PRINTS" id="PR00463">
    <property type="entry name" value="EP450I"/>
</dbReference>
<dbReference type="PRINTS" id="PR00385">
    <property type="entry name" value="P450"/>
</dbReference>
<dbReference type="SUPFAM" id="SSF48264">
    <property type="entry name" value="Cytochrome P450"/>
    <property type="match status" value="1"/>
</dbReference>
<dbReference type="PROSITE" id="PS00086">
    <property type="entry name" value="CYTOCHROME_P450"/>
    <property type="match status" value="1"/>
</dbReference>
<accession>Q9VWR5</accession>
<accession>A5AC85</accession>
<accession>A5AC97</accession>
<accession>A5AC99</accession>
<proteinExistence type="evidence at protein level"/>
<evidence type="ECO:0000250" key="1">
    <source>
        <dbReference type="UniProtKB" id="P04798"/>
    </source>
</evidence>
<evidence type="ECO:0000256" key="2">
    <source>
        <dbReference type="SAM" id="MobiDB-lite"/>
    </source>
</evidence>
<evidence type="ECO:0000269" key="3">
    <source>
    </source>
</evidence>
<evidence type="ECO:0000269" key="4">
    <source>
    </source>
</evidence>
<evidence type="ECO:0000303" key="5">
    <source>
    </source>
</evidence>
<evidence type="ECO:0000305" key="6"/>
<evidence type="ECO:0000312" key="7">
    <source>
        <dbReference type="FlyBase" id="FBgn0004959"/>
    </source>
</evidence>